<gene>
    <name evidence="1" type="primary">mtaD</name>
    <name type="ordered locus">Dred_2061</name>
</gene>
<feature type="chain" id="PRO_1000073186" description="5-methylthioadenosine/S-adenosylhomocysteine deaminase">
    <location>
        <begin position="1"/>
        <end position="433"/>
    </location>
</feature>
<feature type="binding site" evidence="1">
    <location>
        <position position="67"/>
    </location>
    <ligand>
        <name>Zn(2+)</name>
        <dbReference type="ChEBI" id="CHEBI:29105"/>
    </ligand>
</feature>
<feature type="binding site" evidence="1">
    <location>
        <position position="69"/>
    </location>
    <ligand>
        <name>Zn(2+)</name>
        <dbReference type="ChEBI" id="CHEBI:29105"/>
    </ligand>
</feature>
<feature type="binding site" evidence="1">
    <location>
        <position position="96"/>
    </location>
    <ligand>
        <name>substrate</name>
    </ligand>
</feature>
<feature type="binding site" evidence="1">
    <location>
        <position position="148"/>
    </location>
    <ligand>
        <name>substrate</name>
    </ligand>
</feature>
<feature type="binding site" evidence="1">
    <location>
        <position position="186"/>
    </location>
    <ligand>
        <name>substrate</name>
    </ligand>
</feature>
<feature type="binding site" evidence="1">
    <location>
        <position position="213"/>
    </location>
    <ligand>
        <name>Zn(2+)</name>
        <dbReference type="ChEBI" id="CHEBI:29105"/>
    </ligand>
</feature>
<feature type="binding site" evidence="1">
    <location>
        <position position="216"/>
    </location>
    <ligand>
        <name>substrate</name>
    </ligand>
</feature>
<feature type="binding site" evidence="1">
    <location>
        <position position="301"/>
    </location>
    <ligand>
        <name>substrate</name>
    </ligand>
</feature>
<feature type="binding site" evidence="1">
    <location>
        <position position="301"/>
    </location>
    <ligand>
        <name>Zn(2+)</name>
        <dbReference type="ChEBI" id="CHEBI:29105"/>
    </ligand>
</feature>
<organism>
    <name type="scientific">Desulforamulus reducens (strain ATCC BAA-1160 / DSM 100696 / MI-1)</name>
    <name type="common">Desulfotomaculum reducens</name>
    <dbReference type="NCBI Taxonomy" id="349161"/>
    <lineage>
        <taxon>Bacteria</taxon>
        <taxon>Bacillati</taxon>
        <taxon>Bacillota</taxon>
        <taxon>Clostridia</taxon>
        <taxon>Eubacteriales</taxon>
        <taxon>Peptococcaceae</taxon>
        <taxon>Desulforamulus</taxon>
    </lineage>
</organism>
<evidence type="ECO:0000255" key="1">
    <source>
        <dbReference type="HAMAP-Rule" id="MF_01281"/>
    </source>
</evidence>
<reference key="1">
    <citation type="submission" date="2007-03" db="EMBL/GenBank/DDBJ databases">
        <title>Complete sequence of Desulfotomaculum reducens MI-1.</title>
        <authorList>
            <consortium name="US DOE Joint Genome Institute"/>
            <person name="Copeland A."/>
            <person name="Lucas S."/>
            <person name="Lapidus A."/>
            <person name="Barry K."/>
            <person name="Detter J.C."/>
            <person name="Glavina del Rio T."/>
            <person name="Hammon N."/>
            <person name="Israni S."/>
            <person name="Dalin E."/>
            <person name="Tice H."/>
            <person name="Pitluck S."/>
            <person name="Sims D."/>
            <person name="Brettin T."/>
            <person name="Bruce D."/>
            <person name="Han C."/>
            <person name="Tapia R."/>
            <person name="Schmutz J."/>
            <person name="Larimer F."/>
            <person name="Land M."/>
            <person name="Hauser L."/>
            <person name="Kyrpides N."/>
            <person name="Kim E."/>
            <person name="Tebo B.M."/>
            <person name="Richardson P."/>
        </authorList>
    </citation>
    <scope>NUCLEOTIDE SEQUENCE [LARGE SCALE GENOMIC DNA]</scope>
    <source>
        <strain>ATCC BAA-1160 / DSM 100696 / MI-1</strain>
    </source>
</reference>
<protein>
    <recommendedName>
        <fullName evidence="1">5-methylthioadenosine/S-adenosylhomocysteine deaminase</fullName>
        <shortName evidence="1">MTA/SAH deaminase</shortName>
        <ecNumber evidence="1">3.5.4.28</ecNumber>
        <ecNumber evidence="1">3.5.4.31</ecNumber>
    </recommendedName>
</protein>
<comment type="function">
    <text evidence="1">Catalyzes the deamination of 5-methylthioadenosine and S-adenosyl-L-homocysteine into 5-methylthioinosine and S-inosyl-L-homocysteine, respectively. Is also able to deaminate adenosine.</text>
</comment>
<comment type="catalytic activity">
    <reaction evidence="1">
        <text>S-adenosyl-L-homocysteine + H2O + H(+) = S-inosyl-L-homocysteine + NH4(+)</text>
        <dbReference type="Rhea" id="RHEA:20716"/>
        <dbReference type="ChEBI" id="CHEBI:15377"/>
        <dbReference type="ChEBI" id="CHEBI:15378"/>
        <dbReference type="ChEBI" id="CHEBI:28938"/>
        <dbReference type="ChEBI" id="CHEBI:57856"/>
        <dbReference type="ChEBI" id="CHEBI:57985"/>
        <dbReference type="EC" id="3.5.4.28"/>
    </reaction>
</comment>
<comment type="catalytic activity">
    <reaction evidence="1">
        <text>S-methyl-5'-thioadenosine + H2O + H(+) = S-methyl-5'-thioinosine + NH4(+)</text>
        <dbReference type="Rhea" id="RHEA:25025"/>
        <dbReference type="ChEBI" id="CHEBI:15377"/>
        <dbReference type="ChEBI" id="CHEBI:15378"/>
        <dbReference type="ChEBI" id="CHEBI:17509"/>
        <dbReference type="ChEBI" id="CHEBI:28938"/>
        <dbReference type="ChEBI" id="CHEBI:48595"/>
        <dbReference type="EC" id="3.5.4.31"/>
    </reaction>
</comment>
<comment type="cofactor">
    <cofactor evidence="1">
        <name>Zn(2+)</name>
        <dbReference type="ChEBI" id="CHEBI:29105"/>
    </cofactor>
    <text evidence="1">Binds 1 zinc ion per subunit.</text>
</comment>
<comment type="similarity">
    <text evidence="1">Belongs to the metallo-dependent hydrolases superfamily. MTA/SAH deaminase family.</text>
</comment>
<keyword id="KW-0378">Hydrolase</keyword>
<keyword id="KW-0479">Metal-binding</keyword>
<keyword id="KW-1185">Reference proteome</keyword>
<keyword id="KW-0862">Zinc</keyword>
<dbReference type="EC" id="3.5.4.28" evidence="1"/>
<dbReference type="EC" id="3.5.4.31" evidence="1"/>
<dbReference type="EMBL" id="CP000612">
    <property type="protein sequence ID" value="ABO50578.1"/>
    <property type="molecule type" value="Genomic_DNA"/>
</dbReference>
<dbReference type="RefSeq" id="WP_011878384.1">
    <property type="nucleotide sequence ID" value="NC_009253.1"/>
</dbReference>
<dbReference type="SMR" id="A4J675"/>
<dbReference type="STRING" id="349161.Dred_2061"/>
<dbReference type="KEGG" id="drm:Dred_2061"/>
<dbReference type="eggNOG" id="COG0402">
    <property type="taxonomic scope" value="Bacteria"/>
</dbReference>
<dbReference type="HOGENOM" id="CLU_012358_2_1_9"/>
<dbReference type="OrthoDB" id="9807210at2"/>
<dbReference type="Proteomes" id="UP000001556">
    <property type="component" value="Chromosome"/>
</dbReference>
<dbReference type="GO" id="GO:0090614">
    <property type="term" value="F:5'-methylthioadenosine deaminase activity"/>
    <property type="evidence" value="ECO:0007669"/>
    <property type="project" value="UniProtKB-UniRule"/>
</dbReference>
<dbReference type="GO" id="GO:0046872">
    <property type="term" value="F:metal ion binding"/>
    <property type="evidence" value="ECO:0007669"/>
    <property type="project" value="UniProtKB-KW"/>
</dbReference>
<dbReference type="GO" id="GO:0050270">
    <property type="term" value="F:S-adenosylhomocysteine deaminase activity"/>
    <property type="evidence" value="ECO:0007669"/>
    <property type="project" value="UniProtKB-UniRule"/>
</dbReference>
<dbReference type="CDD" id="cd01298">
    <property type="entry name" value="ATZ_TRZ_like"/>
    <property type="match status" value="1"/>
</dbReference>
<dbReference type="FunFam" id="3.20.20.140:FF:000014">
    <property type="entry name" value="5-methylthioadenosine/S-adenosylhomocysteine deaminase"/>
    <property type="match status" value="1"/>
</dbReference>
<dbReference type="Gene3D" id="3.20.20.140">
    <property type="entry name" value="Metal-dependent hydrolases"/>
    <property type="match status" value="1"/>
</dbReference>
<dbReference type="Gene3D" id="2.30.40.10">
    <property type="entry name" value="Urease, subunit C, domain 1"/>
    <property type="match status" value="1"/>
</dbReference>
<dbReference type="HAMAP" id="MF_01281">
    <property type="entry name" value="MTA_SAH_deamin"/>
    <property type="match status" value="1"/>
</dbReference>
<dbReference type="InterPro" id="IPR006680">
    <property type="entry name" value="Amidohydro-rel"/>
</dbReference>
<dbReference type="InterPro" id="IPR023512">
    <property type="entry name" value="Deaminase_MtaD/DadD"/>
</dbReference>
<dbReference type="InterPro" id="IPR011059">
    <property type="entry name" value="Metal-dep_hydrolase_composite"/>
</dbReference>
<dbReference type="InterPro" id="IPR032466">
    <property type="entry name" value="Metal_Hydrolase"/>
</dbReference>
<dbReference type="InterPro" id="IPR050287">
    <property type="entry name" value="MTA/SAH_deaminase"/>
</dbReference>
<dbReference type="PANTHER" id="PTHR43794:SF11">
    <property type="entry name" value="AMIDOHYDROLASE-RELATED DOMAIN-CONTAINING PROTEIN"/>
    <property type="match status" value="1"/>
</dbReference>
<dbReference type="PANTHER" id="PTHR43794">
    <property type="entry name" value="AMINOHYDROLASE SSNA-RELATED"/>
    <property type="match status" value="1"/>
</dbReference>
<dbReference type="Pfam" id="PF01979">
    <property type="entry name" value="Amidohydro_1"/>
    <property type="match status" value="1"/>
</dbReference>
<dbReference type="SUPFAM" id="SSF51338">
    <property type="entry name" value="Composite domain of metallo-dependent hydrolases"/>
    <property type="match status" value="1"/>
</dbReference>
<dbReference type="SUPFAM" id="SSF51556">
    <property type="entry name" value="Metallo-dependent hydrolases"/>
    <property type="match status" value="1"/>
</dbReference>
<accession>A4J675</accession>
<sequence>MNRLLIRGATILTMEGPEAIIETGELLIEDGWITHVGLPGSASGSFDMDEVIEADGQVAMPGFINCHTHAAMTLLRGYADDLPLMTWLSEKIWPFEGRMTNEDIYWGTMLACLEMIKSGTTCFGDMYDCMHDVARAVEKTGMRAMLSRGMIGIAPTADKALIEAEELARNWNGKADGRITVMVAPHAPYTCPPDYLDKAMNLAAKHKLGINIHLAETLTEFEDIKKQYGKTPVKHLDQLGLFKLPVLAAHCVHLDEEDMDILAQKAMGVAYNPQSNMKLASGIAPVAKLLELGATVGIGTDGTASNNNLDMLEELRAGSFLQKVSTMNPEVIPAYRALQMATIDGALCMGLGDRVGLIKEGMRGDVILLDTQQPHMCPRHNLVANIAYAANSSDVRTVVIDGKVVMLDRVVKTIDEERVMYEVRERAARLAGK</sequence>
<name>MTAD_DESRM</name>
<proteinExistence type="inferred from homology"/>